<keyword id="KW-0963">Cytoplasm</keyword>
<keyword id="KW-0687">Ribonucleoprotein</keyword>
<keyword id="KW-0689">Ribosomal protein</keyword>
<keyword id="KW-0694">RNA-binding</keyword>
<keyword id="KW-0699">rRNA-binding</keyword>
<keyword id="KW-0819">tRNA processing</keyword>
<reference key="1">
    <citation type="journal article" date="2009" name="Proc. Natl. Acad. Sci. U.S.A.">
        <title>Biogeography of the Sulfolobus islandicus pan-genome.</title>
        <authorList>
            <person name="Reno M.L."/>
            <person name="Held N.L."/>
            <person name="Fields C.J."/>
            <person name="Burke P.V."/>
            <person name="Whitaker R.J."/>
        </authorList>
    </citation>
    <scope>NUCLEOTIDE SEQUENCE [LARGE SCALE GENOMIC DNA]</scope>
    <source>
        <strain>Y.G.57.14 / Yellowstone #1</strain>
    </source>
</reference>
<organism>
    <name type="scientific">Saccharolobus islandicus (strain Y.G.57.14 / Yellowstone #1)</name>
    <name type="common">Sulfolobus islandicus</name>
    <dbReference type="NCBI Taxonomy" id="439386"/>
    <lineage>
        <taxon>Archaea</taxon>
        <taxon>Thermoproteota</taxon>
        <taxon>Thermoprotei</taxon>
        <taxon>Sulfolobales</taxon>
        <taxon>Sulfolobaceae</taxon>
        <taxon>Saccharolobus</taxon>
    </lineage>
</organism>
<accession>C3N8Q2</accession>
<name>RL7A_SACI7</name>
<dbReference type="EMBL" id="CP001403">
    <property type="protein sequence ID" value="ACP46407.1"/>
    <property type="molecule type" value="Genomic_DNA"/>
</dbReference>
<dbReference type="RefSeq" id="WP_012711999.1">
    <property type="nucleotide sequence ID" value="NC_012622.1"/>
</dbReference>
<dbReference type="SMR" id="C3N8Q2"/>
<dbReference type="GeneID" id="84062343"/>
<dbReference type="KEGG" id="siy:YG5714_2158"/>
<dbReference type="HOGENOM" id="CLU_084513_4_0_2"/>
<dbReference type="Proteomes" id="UP000002308">
    <property type="component" value="Chromosome"/>
</dbReference>
<dbReference type="GO" id="GO:0005737">
    <property type="term" value="C:cytoplasm"/>
    <property type="evidence" value="ECO:0007669"/>
    <property type="project" value="UniProtKB-SubCell"/>
</dbReference>
<dbReference type="GO" id="GO:1990904">
    <property type="term" value="C:ribonucleoprotein complex"/>
    <property type="evidence" value="ECO:0007669"/>
    <property type="project" value="UniProtKB-KW"/>
</dbReference>
<dbReference type="GO" id="GO:0005840">
    <property type="term" value="C:ribosome"/>
    <property type="evidence" value="ECO:0007669"/>
    <property type="project" value="UniProtKB-KW"/>
</dbReference>
<dbReference type="GO" id="GO:0004526">
    <property type="term" value="F:ribonuclease P activity"/>
    <property type="evidence" value="ECO:0007669"/>
    <property type="project" value="UniProtKB-UniRule"/>
</dbReference>
<dbReference type="GO" id="GO:0019843">
    <property type="term" value="F:rRNA binding"/>
    <property type="evidence" value="ECO:0007669"/>
    <property type="project" value="UniProtKB-KW"/>
</dbReference>
<dbReference type="GO" id="GO:0003735">
    <property type="term" value="F:structural constituent of ribosome"/>
    <property type="evidence" value="ECO:0007669"/>
    <property type="project" value="InterPro"/>
</dbReference>
<dbReference type="GO" id="GO:0042254">
    <property type="term" value="P:ribosome biogenesis"/>
    <property type="evidence" value="ECO:0007669"/>
    <property type="project" value="InterPro"/>
</dbReference>
<dbReference type="GO" id="GO:0006412">
    <property type="term" value="P:translation"/>
    <property type="evidence" value="ECO:0007669"/>
    <property type="project" value="UniProtKB-UniRule"/>
</dbReference>
<dbReference type="GO" id="GO:0001682">
    <property type="term" value="P:tRNA 5'-leader removal"/>
    <property type="evidence" value="ECO:0007669"/>
    <property type="project" value="UniProtKB-UniRule"/>
</dbReference>
<dbReference type="FunFam" id="3.30.1330.30:FF:000020">
    <property type="entry name" value="50S ribosomal protein L7Ae"/>
    <property type="match status" value="1"/>
</dbReference>
<dbReference type="Gene3D" id="3.30.1330.30">
    <property type="match status" value="1"/>
</dbReference>
<dbReference type="HAMAP" id="MF_00326">
    <property type="entry name" value="Ribosomal_eL8"/>
    <property type="match status" value="1"/>
</dbReference>
<dbReference type="InterPro" id="IPR050257">
    <property type="entry name" value="eL8/uL1-like"/>
</dbReference>
<dbReference type="InterPro" id="IPR029064">
    <property type="entry name" value="Ribosomal_eL30-like_sf"/>
</dbReference>
<dbReference type="InterPro" id="IPR004037">
    <property type="entry name" value="Ribosomal_eL8-like_CS"/>
</dbReference>
<dbReference type="InterPro" id="IPR004038">
    <property type="entry name" value="Ribosomal_eL8/eL30/eS12/Gad45"/>
</dbReference>
<dbReference type="InterPro" id="IPR018492">
    <property type="entry name" value="Ribosomal_eL8/Nhp2"/>
</dbReference>
<dbReference type="InterPro" id="IPR022481">
    <property type="entry name" value="Ribosomal_eL8_arc"/>
</dbReference>
<dbReference type="NCBIfam" id="TIGR03677">
    <property type="entry name" value="eL8_ribo"/>
    <property type="match status" value="1"/>
</dbReference>
<dbReference type="PANTHER" id="PTHR23105">
    <property type="entry name" value="RIBOSOMAL PROTEIN L7AE FAMILY MEMBER"/>
    <property type="match status" value="1"/>
</dbReference>
<dbReference type="Pfam" id="PF01248">
    <property type="entry name" value="Ribosomal_L7Ae"/>
    <property type="match status" value="1"/>
</dbReference>
<dbReference type="PRINTS" id="PR00881">
    <property type="entry name" value="L7ARS6FAMILY"/>
</dbReference>
<dbReference type="PRINTS" id="PR00884">
    <property type="entry name" value="RIBOSOMALHS6"/>
</dbReference>
<dbReference type="SUPFAM" id="SSF55315">
    <property type="entry name" value="L30e-like"/>
    <property type="match status" value="1"/>
</dbReference>
<dbReference type="PROSITE" id="PS01082">
    <property type="entry name" value="RIBOSOMAL_L7AE"/>
    <property type="match status" value="1"/>
</dbReference>
<gene>
    <name evidence="1" type="primary">rpl7ae</name>
    <name type="ordered locus">YG5714_2158</name>
</gene>
<evidence type="ECO:0000255" key="1">
    <source>
        <dbReference type="HAMAP-Rule" id="MF_00326"/>
    </source>
</evidence>
<evidence type="ECO:0000305" key="2"/>
<comment type="function">
    <text evidence="1">Multifunctional RNA-binding protein that recognizes the K-turn motif in ribosomal RNA, the RNA component of RNase P, box H/ACA, box C/D and box C'/D' sRNAs.</text>
</comment>
<comment type="subunit">
    <text evidence="1">Part of the 50S ribosomal subunit. Probably part of the RNase P complex.</text>
</comment>
<comment type="subcellular location">
    <subcellularLocation>
        <location evidence="1">Cytoplasm</location>
    </subcellularLocation>
</comment>
<comment type="similarity">
    <text evidence="1">Belongs to the eukaryotic ribosomal protein eL8 family.</text>
</comment>
<sequence length="127" mass="13708">MSKASYVKFEVPQDLADKVLEAVRKAKESGKIKKGTNETTKAVERGQAKLVVIAEDVQPEEIVAHLPLLCDEKKIPYVYVSSKKALGEACGLQVATASAAILEPGEAKDLVDEIVKRVNEIKGKTSS</sequence>
<protein>
    <recommendedName>
        <fullName evidence="1">Large ribosomal subunit protein eL8</fullName>
    </recommendedName>
    <alternativeName>
        <fullName evidence="2">50S ribosomal protein L7Ae</fullName>
    </alternativeName>
    <alternativeName>
        <fullName evidence="1">Ribosomal protein L8e</fullName>
    </alternativeName>
</protein>
<feature type="chain" id="PRO_1000205164" description="Large ribosomal subunit protein eL8">
    <location>
        <begin position="1"/>
        <end position="127"/>
    </location>
</feature>
<proteinExistence type="inferred from homology"/>